<comment type="function">
    <text evidence="1">Involved in mRNA degradation. Catalyzes the phosphorolysis of single-stranded polyribonucleotides processively in the 3'- to 5'-direction.</text>
</comment>
<comment type="catalytic activity">
    <reaction evidence="1">
        <text>RNA(n+1) + phosphate = RNA(n) + a ribonucleoside 5'-diphosphate</text>
        <dbReference type="Rhea" id="RHEA:22096"/>
        <dbReference type="Rhea" id="RHEA-COMP:14527"/>
        <dbReference type="Rhea" id="RHEA-COMP:17342"/>
        <dbReference type="ChEBI" id="CHEBI:43474"/>
        <dbReference type="ChEBI" id="CHEBI:57930"/>
        <dbReference type="ChEBI" id="CHEBI:140395"/>
        <dbReference type="EC" id="2.7.7.8"/>
    </reaction>
</comment>
<comment type="cofactor">
    <cofactor evidence="1">
        <name>Mg(2+)</name>
        <dbReference type="ChEBI" id="CHEBI:18420"/>
    </cofactor>
</comment>
<comment type="subcellular location">
    <subcellularLocation>
        <location evidence="1">Cytoplasm</location>
    </subcellularLocation>
</comment>
<comment type="similarity">
    <text evidence="1">Belongs to the polyribonucleotide nucleotidyltransferase family.</text>
</comment>
<accession>A2C794</accession>
<protein>
    <recommendedName>
        <fullName evidence="1">Polyribonucleotide nucleotidyltransferase</fullName>
        <ecNumber evidence="1">2.7.7.8</ecNumber>
    </recommendedName>
    <alternativeName>
        <fullName evidence="1">Polynucleotide phosphorylase</fullName>
        <shortName evidence="1">PNPase</shortName>
    </alternativeName>
</protein>
<organism>
    <name type="scientific">Prochlorococcus marinus (strain MIT 9303)</name>
    <dbReference type="NCBI Taxonomy" id="59922"/>
    <lineage>
        <taxon>Bacteria</taxon>
        <taxon>Bacillati</taxon>
        <taxon>Cyanobacteriota</taxon>
        <taxon>Cyanophyceae</taxon>
        <taxon>Synechococcales</taxon>
        <taxon>Prochlorococcaceae</taxon>
        <taxon>Prochlorococcus</taxon>
    </lineage>
</organism>
<reference key="1">
    <citation type="journal article" date="2007" name="PLoS Genet.">
        <title>Patterns and implications of gene gain and loss in the evolution of Prochlorococcus.</title>
        <authorList>
            <person name="Kettler G.C."/>
            <person name="Martiny A.C."/>
            <person name="Huang K."/>
            <person name="Zucker J."/>
            <person name="Coleman M.L."/>
            <person name="Rodrigue S."/>
            <person name="Chen F."/>
            <person name="Lapidus A."/>
            <person name="Ferriera S."/>
            <person name="Johnson J."/>
            <person name="Steglich C."/>
            <person name="Church G.M."/>
            <person name="Richardson P."/>
            <person name="Chisholm S.W."/>
        </authorList>
    </citation>
    <scope>NUCLEOTIDE SEQUENCE [LARGE SCALE GENOMIC DNA]</scope>
    <source>
        <strain>MIT 9303</strain>
    </source>
</reference>
<keyword id="KW-0963">Cytoplasm</keyword>
<keyword id="KW-0460">Magnesium</keyword>
<keyword id="KW-0479">Metal-binding</keyword>
<keyword id="KW-0548">Nucleotidyltransferase</keyword>
<keyword id="KW-0694">RNA-binding</keyword>
<keyword id="KW-0808">Transferase</keyword>
<gene>
    <name evidence="1" type="primary">pnp</name>
    <name type="ordered locus">P9303_06021</name>
</gene>
<dbReference type="EC" id="2.7.7.8" evidence="1"/>
<dbReference type="EMBL" id="CP000554">
    <property type="protein sequence ID" value="ABM77354.1"/>
    <property type="molecule type" value="Genomic_DNA"/>
</dbReference>
<dbReference type="RefSeq" id="WP_011825274.1">
    <property type="nucleotide sequence ID" value="NC_008820.1"/>
</dbReference>
<dbReference type="SMR" id="A2C794"/>
<dbReference type="STRING" id="59922.P9303_06021"/>
<dbReference type="KEGG" id="pmf:P9303_06021"/>
<dbReference type="HOGENOM" id="CLU_004217_2_2_3"/>
<dbReference type="BioCyc" id="PMAR59922:G1G80-553-MONOMER"/>
<dbReference type="Proteomes" id="UP000002274">
    <property type="component" value="Chromosome"/>
</dbReference>
<dbReference type="GO" id="GO:0005829">
    <property type="term" value="C:cytosol"/>
    <property type="evidence" value="ECO:0007669"/>
    <property type="project" value="TreeGrafter"/>
</dbReference>
<dbReference type="GO" id="GO:0000175">
    <property type="term" value="F:3'-5'-RNA exonuclease activity"/>
    <property type="evidence" value="ECO:0007669"/>
    <property type="project" value="TreeGrafter"/>
</dbReference>
<dbReference type="GO" id="GO:0000287">
    <property type="term" value="F:magnesium ion binding"/>
    <property type="evidence" value="ECO:0007669"/>
    <property type="project" value="UniProtKB-UniRule"/>
</dbReference>
<dbReference type="GO" id="GO:0004654">
    <property type="term" value="F:polyribonucleotide nucleotidyltransferase activity"/>
    <property type="evidence" value="ECO:0007669"/>
    <property type="project" value="UniProtKB-UniRule"/>
</dbReference>
<dbReference type="GO" id="GO:0003723">
    <property type="term" value="F:RNA binding"/>
    <property type="evidence" value="ECO:0007669"/>
    <property type="project" value="UniProtKB-UniRule"/>
</dbReference>
<dbReference type="GO" id="GO:0006402">
    <property type="term" value="P:mRNA catabolic process"/>
    <property type="evidence" value="ECO:0007669"/>
    <property type="project" value="UniProtKB-UniRule"/>
</dbReference>
<dbReference type="GO" id="GO:0006396">
    <property type="term" value="P:RNA processing"/>
    <property type="evidence" value="ECO:0007669"/>
    <property type="project" value="InterPro"/>
</dbReference>
<dbReference type="CDD" id="cd02393">
    <property type="entry name" value="KH-I_PNPase"/>
    <property type="match status" value="1"/>
</dbReference>
<dbReference type="CDD" id="cd11363">
    <property type="entry name" value="RNase_PH_PNPase_1"/>
    <property type="match status" value="1"/>
</dbReference>
<dbReference type="CDD" id="cd11364">
    <property type="entry name" value="RNase_PH_PNPase_2"/>
    <property type="match status" value="1"/>
</dbReference>
<dbReference type="FunFam" id="3.30.1370.10:FF:000001">
    <property type="entry name" value="Polyribonucleotide nucleotidyltransferase"/>
    <property type="match status" value="1"/>
</dbReference>
<dbReference type="FunFam" id="3.30.230.70:FF:000001">
    <property type="entry name" value="Polyribonucleotide nucleotidyltransferase"/>
    <property type="match status" value="1"/>
</dbReference>
<dbReference type="FunFam" id="3.30.230.70:FF:000002">
    <property type="entry name" value="Polyribonucleotide nucleotidyltransferase"/>
    <property type="match status" value="1"/>
</dbReference>
<dbReference type="FunFam" id="2.40.50.140:FF:000189">
    <property type="entry name" value="Polyribonucleotide nucleotidyltransferase, putative"/>
    <property type="match status" value="1"/>
</dbReference>
<dbReference type="Gene3D" id="3.30.230.70">
    <property type="entry name" value="GHMP Kinase, N-terminal domain"/>
    <property type="match status" value="2"/>
</dbReference>
<dbReference type="Gene3D" id="3.30.1370.10">
    <property type="entry name" value="K Homology domain, type 1"/>
    <property type="match status" value="1"/>
</dbReference>
<dbReference type="Gene3D" id="2.40.50.140">
    <property type="entry name" value="Nucleic acid-binding proteins"/>
    <property type="match status" value="1"/>
</dbReference>
<dbReference type="HAMAP" id="MF_01595">
    <property type="entry name" value="PNPase"/>
    <property type="match status" value="1"/>
</dbReference>
<dbReference type="InterPro" id="IPR001247">
    <property type="entry name" value="ExoRNase_PH_dom1"/>
</dbReference>
<dbReference type="InterPro" id="IPR015847">
    <property type="entry name" value="ExoRNase_PH_dom2"/>
</dbReference>
<dbReference type="InterPro" id="IPR036345">
    <property type="entry name" value="ExoRNase_PH_dom2_sf"/>
</dbReference>
<dbReference type="InterPro" id="IPR004087">
    <property type="entry name" value="KH_dom"/>
</dbReference>
<dbReference type="InterPro" id="IPR004088">
    <property type="entry name" value="KH_dom_type_1"/>
</dbReference>
<dbReference type="InterPro" id="IPR036612">
    <property type="entry name" value="KH_dom_type_1_sf"/>
</dbReference>
<dbReference type="InterPro" id="IPR012340">
    <property type="entry name" value="NA-bd_OB-fold"/>
</dbReference>
<dbReference type="InterPro" id="IPR012162">
    <property type="entry name" value="PNPase"/>
</dbReference>
<dbReference type="InterPro" id="IPR027408">
    <property type="entry name" value="PNPase/RNase_PH_dom_sf"/>
</dbReference>
<dbReference type="InterPro" id="IPR015848">
    <property type="entry name" value="PNPase_PH_RNA-bd_bac/org-type"/>
</dbReference>
<dbReference type="InterPro" id="IPR020568">
    <property type="entry name" value="Ribosomal_Su5_D2-typ_SF"/>
</dbReference>
<dbReference type="InterPro" id="IPR003029">
    <property type="entry name" value="S1_domain"/>
</dbReference>
<dbReference type="NCBIfam" id="TIGR03591">
    <property type="entry name" value="polynuc_phos"/>
    <property type="match status" value="1"/>
</dbReference>
<dbReference type="NCBIfam" id="NF008805">
    <property type="entry name" value="PRK11824.1"/>
    <property type="match status" value="1"/>
</dbReference>
<dbReference type="PANTHER" id="PTHR11252">
    <property type="entry name" value="POLYRIBONUCLEOTIDE NUCLEOTIDYLTRANSFERASE"/>
    <property type="match status" value="1"/>
</dbReference>
<dbReference type="PANTHER" id="PTHR11252:SF0">
    <property type="entry name" value="POLYRIBONUCLEOTIDE NUCLEOTIDYLTRANSFERASE 1, MITOCHONDRIAL"/>
    <property type="match status" value="1"/>
</dbReference>
<dbReference type="Pfam" id="PF00013">
    <property type="entry name" value="KH_1"/>
    <property type="match status" value="1"/>
</dbReference>
<dbReference type="Pfam" id="PF03726">
    <property type="entry name" value="PNPase"/>
    <property type="match status" value="1"/>
</dbReference>
<dbReference type="Pfam" id="PF01138">
    <property type="entry name" value="RNase_PH"/>
    <property type="match status" value="2"/>
</dbReference>
<dbReference type="Pfam" id="PF03725">
    <property type="entry name" value="RNase_PH_C"/>
    <property type="match status" value="2"/>
</dbReference>
<dbReference type="Pfam" id="PF00575">
    <property type="entry name" value="S1"/>
    <property type="match status" value="1"/>
</dbReference>
<dbReference type="PIRSF" id="PIRSF005499">
    <property type="entry name" value="PNPase"/>
    <property type="match status" value="1"/>
</dbReference>
<dbReference type="SMART" id="SM00322">
    <property type="entry name" value="KH"/>
    <property type="match status" value="1"/>
</dbReference>
<dbReference type="SMART" id="SM00316">
    <property type="entry name" value="S1"/>
    <property type="match status" value="1"/>
</dbReference>
<dbReference type="SUPFAM" id="SSF54791">
    <property type="entry name" value="Eukaryotic type KH-domain (KH-domain type I)"/>
    <property type="match status" value="1"/>
</dbReference>
<dbReference type="SUPFAM" id="SSF50249">
    <property type="entry name" value="Nucleic acid-binding proteins"/>
    <property type="match status" value="1"/>
</dbReference>
<dbReference type="SUPFAM" id="SSF55666">
    <property type="entry name" value="Ribonuclease PH domain 2-like"/>
    <property type="match status" value="2"/>
</dbReference>
<dbReference type="SUPFAM" id="SSF54211">
    <property type="entry name" value="Ribosomal protein S5 domain 2-like"/>
    <property type="match status" value="2"/>
</dbReference>
<dbReference type="PROSITE" id="PS50084">
    <property type="entry name" value="KH_TYPE_1"/>
    <property type="match status" value="1"/>
</dbReference>
<dbReference type="PROSITE" id="PS50126">
    <property type="entry name" value="S1"/>
    <property type="match status" value="1"/>
</dbReference>
<feature type="chain" id="PRO_0000329767" description="Polyribonucleotide nucleotidyltransferase">
    <location>
        <begin position="1"/>
        <end position="721"/>
    </location>
</feature>
<feature type="domain" description="KH" evidence="1">
    <location>
        <begin position="562"/>
        <end position="621"/>
    </location>
</feature>
<feature type="domain" description="S1 motif" evidence="1">
    <location>
        <begin position="631"/>
        <end position="699"/>
    </location>
</feature>
<feature type="region of interest" description="Disordered" evidence="2">
    <location>
        <begin position="700"/>
        <end position="721"/>
    </location>
</feature>
<feature type="binding site" evidence="1">
    <location>
        <position position="495"/>
    </location>
    <ligand>
        <name>Mg(2+)</name>
        <dbReference type="ChEBI" id="CHEBI:18420"/>
    </ligand>
</feature>
<feature type="binding site" evidence="1">
    <location>
        <position position="501"/>
    </location>
    <ligand>
        <name>Mg(2+)</name>
        <dbReference type="ChEBI" id="CHEBI:18420"/>
    </ligand>
</feature>
<name>PNP_PROM3</name>
<evidence type="ECO:0000255" key="1">
    <source>
        <dbReference type="HAMAP-Rule" id="MF_01595"/>
    </source>
</evidence>
<evidence type="ECO:0000256" key="2">
    <source>
        <dbReference type="SAM" id="MobiDB-lite"/>
    </source>
</evidence>
<sequence length="721" mass="77898">MQGQTQSISFDGREIRLTTGRYAPQAGGSVMMECGDTSVLVTATRSTGREGIDFLPLICDYEERLYAAGRIPGSFMRREGRPPERATLIARLIDRPMRPLFPSWMRDDLQIVATCLSLDERVPADVLAVTGASMATLLAGIPFQGPMAAVRVGLLGDDFVLNPSYREIERGDLDLVVAGTPDGVVMVEAGANQLPEGDVIEAIDFGYEAVCELIKAQQSILKDAGIKQVQPEPPTQDTKLSTYLEKNCSKSIGEVLKQFEQTKAERDSKLDAIKAKTAEAIDSLKEDDAVRKSVNANSKVLSNNFKALTKKLMREQIIKQGKRVDGRKLDEVRTITSAAGVLPKRVHGSGLFQRGLTQVLSTATLGTPSDAQEMDDLNPGPEKTYLHHYNFPPYSVGETRPMRSPGRREVGHGSLAERAIIPVLPPKDTFPYVLRVVSEVLSSNGSTSMGSVCGSTLALMDAGVPLKAPVSGAAMGLIKEDAEIRILTDIQGIEDFLGDMDFKVAGTKDGITALQMDMKITGLPVKTIAEAVNQARPARIHILEKMLEAIDAPRTSLSPHAPRLLSFRIDPELIGTVIGPGGRTIKGITERTNTKIDIEDGGIVTIASHDGAAAEAAQRIIEGLTRKVNEGEVFSGTITRIIPIGAFVEILPGKEGMIHISQLSEARVEKVDDVVKVGDEVTVRIREIDNRGRINLTLRGVPQNGEETQSEPAPTPVAPLN</sequence>
<proteinExistence type="inferred from homology"/>